<protein>
    <recommendedName>
        <fullName evidence="1">Small ribosomal subunit protein uS8</fullName>
    </recommendedName>
    <alternativeName>
        <fullName evidence="2">30S ribosomal protein S8</fullName>
    </alternativeName>
</protein>
<keyword id="KW-0687">Ribonucleoprotein</keyword>
<keyword id="KW-0689">Ribosomal protein</keyword>
<keyword id="KW-0694">RNA-binding</keyword>
<keyword id="KW-0699">rRNA-binding</keyword>
<evidence type="ECO:0000255" key="1">
    <source>
        <dbReference type="HAMAP-Rule" id="MF_01302"/>
    </source>
</evidence>
<evidence type="ECO:0000305" key="2"/>
<dbReference type="EMBL" id="CP000546">
    <property type="protein sequence ID" value="ABN02835.1"/>
    <property type="molecule type" value="Genomic_DNA"/>
</dbReference>
<dbReference type="RefSeq" id="WP_004185153.1">
    <property type="nucleotide sequence ID" value="NC_008836.1"/>
</dbReference>
<dbReference type="SMR" id="A2S7J0"/>
<dbReference type="GeneID" id="93061818"/>
<dbReference type="KEGG" id="bml:BMA10229_A1938"/>
<dbReference type="HOGENOM" id="CLU_098428_0_0_4"/>
<dbReference type="Proteomes" id="UP000002283">
    <property type="component" value="Chromosome I"/>
</dbReference>
<dbReference type="GO" id="GO:1990904">
    <property type="term" value="C:ribonucleoprotein complex"/>
    <property type="evidence" value="ECO:0007669"/>
    <property type="project" value="UniProtKB-KW"/>
</dbReference>
<dbReference type="GO" id="GO:0005840">
    <property type="term" value="C:ribosome"/>
    <property type="evidence" value="ECO:0007669"/>
    <property type="project" value="UniProtKB-KW"/>
</dbReference>
<dbReference type="GO" id="GO:0019843">
    <property type="term" value="F:rRNA binding"/>
    <property type="evidence" value="ECO:0007669"/>
    <property type="project" value="UniProtKB-UniRule"/>
</dbReference>
<dbReference type="GO" id="GO:0003735">
    <property type="term" value="F:structural constituent of ribosome"/>
    <property type="evidence" value="ECO:0007669"/>
    <property type="project" value="InterPro"/>
</dbReference>
<dbReference type="GO" id="GO:0006412">
    <property type="term" value="P:translation"/>
    <property type="evidence" value="ECO:0007669"/>
    <property type="project" value="UniProtKB-UniRule"/>
</dbReference>
<dbReference type="FunFam" id="3.30.1370.30:FF:000003">
    <property type="entry name" value="30S ribosomal protein S8"/>
    <property type="match status" value="1"/>
</dbReference>
<dbReference type="FunFam" id="3.30.1490.10:FF:000001">
    <property type="entry name" value="30S ribosomal protein S8"/>
    <property type="match status" value="1"/>
</dbReference>
<dbReference type="Gene3D" id="3.30.1370.30">
    <property type="match status" value="1"/>
</dbReference>
<dbReference type="Gene3D" id="3.30.1490.10">
    <property type="match status" value="1"/>
</dbReference>
<dbReference type="HAMAP" id="MF_01302_B">
    <property type="entry name" value="Ribosomal_uS8_B"/>
    <property type="match status" value="1"/>
</dbReference>
<dbReference type="InterPro" id="IPR000630">
    <property type="entry name" value="Ribosomal_uS8"/>
</dbReference>
<dbReference type="InterPro" id="IPR047863">
    <property type="entry name" value="Ribosomal_uS8_CS"/>
</dbReference>
<dbReference type="InterPro" id="IPR035987">
    <property type="entry name" value="Ribosomal_uS8_sf"/>
</dbReference>
<dbReference type="NCBIfam" id="NF001109">
    <property type="entry name" value="PRK00136.1"/>
    <property type="match status" value="1"/>
</dbReference>
<dbReference type="PANTHER" id="PTHR11758">
    <property type="entry name" value="40S RIBOSOMAL PROTEIN S15A"/>
    <property type="match status" value="1"/>
</dbReference>
<dbReference type="Pfam" id="PF00410">
    <property type="entry name" value="Ribosomal_S8"/>
    <property type="match status" value="1"/>
</dbReference>
<dbReference type="SUPFAM" id="SSF56047">
    <property type="entry name" value="Ribosomal protein S8"/>
    <property type="match status" value="1"/>
</dbReference>
<dbReference type="PROSITE" id="PS00053">
    <property type="entry name" value="RIBOSOMAL_S8"/>
    <property type="match status" value="1"/>
</dbReference>
<comment type="function">
    <text evidence="1">One of the primary rRNA binding proteins, it binds directly to 16S rRNA central domain where it helps coordinate assembly of the platform of the 30S subunit.</text>
</comment>
<comment type="subunit">
    <text evidence="1">Part of the 30S ribosomal subunit. Contacts proteins S5 and S12.</text>
</comment>
<comment type="similarity">
    <text evidence="1">Belongs to the universal ribosomal protein uS8 family.</text>
</comment>
<sequence length="131" mass="14199">MSMSDPIADMLTRIRNAQMVEKVSVSMPSSKVKVAIAQVLKDEGYIDDFAVKADGAKAELNIALKYYAGRPVIERLERVSKPGLRVYRGRNEIPQVMNGLGVAIVSTPKGVMTDRKARATGVGGEVICYVA</sequence>
<organism>
    <name type="scientific">Burkholderia mallei (strain NCTC 10229)</name>
    <dbReference type="NCBI Taxonomy" id="412022"/>
    <lineage>
        <taxon>Bacteria</taxon>
        <taxon>Pseudomonadati</taxon>
        <taxon>Pseudomonadota</taxon>
        <taxon>Betaproteobacteria</taxon>
        <taxon>Burkholderiales</taxon>
        <taxon>Burkholderiaceae</taxon>
        <taxon>Burkholderia</taxon>
        <taxon>pseudomallei group</taxon>
    </lineage>
</organism>
<name>RS8_BURM9</name>
<gene>
    <name evidence="1" type="primary">rpsH</name>
    <name type="ordered locus">BMA10229_A1938</name>
</gene>
<proteinExistence type="inferred from homology"/>
<feature type="chain" id="PRO_1000051768" description="Small ribosomal subunit protein uS8">
    <location>
        <begin position="1"/>
        <end position="131"/>
    </location>
</feature>
<accession>A2S7J0</accession>
<reference key="1">
    <citation type="journal article" date="2010" name="Genome Biol. Evol.">
        <title>Continuing evolution of Burkholderia mallei through genome reduction and large-scale rearrangements.</title>
        <authorList>
            <person name="Losada L."/>
            <person name="Ronning C.M."/>
            <person name="DeShazer D."/>
            <person name="Woods D."/>
            <person name="Fedorova N."/>
            <person name="Kim H.S."/>
            <person name="Shabalina S.A."/>
            <person name="Pearson T.R."/>
            <person name="Brinkac L."/>
            <person name="Tan P."/>
            <person name="Nandi T."/>
            <person name="Crabtree J."/>
            <person name="Badger J."/>
            <person name="Beckstrom-Sternberg S."/>
            <person name="Saqib M."/>
            <person name="Schutzer S.E."/>
            <person name="Keim P."/>
            <person name="Nierman W.C."/>
        </authorList>
    </citation>
    <scope>NUCLEOTIDE SEQUENCE [LARGE SCALE GENOMIC DNA]</scope>
    <source>
        <strain>NCTC 10229</strain>
    </source>
</reference>